<protein>
    <recommendedName>
        <fullName evidence="2">Cyanuric acid amidohydrolase</fullName>
        <shortName evidence="2">CAH</shortName>
        <ecNumber evidence="2 3">3.5.2.15</ecNumber>
    </recommendedName>
</protein>
<gene>
    <name type="ORF">BRAO375_2640015</name>
</gene>
<reference key="1">
    <citation type="journal article" date="2012" name="Genes (Basel)">
        <title>Comparative Genomics of Aeschynomene Symbionts: Insights into the Ecological Lifestyle of Nod-Independent Photosynthetic Bradyrhizobia.</title>
        <authorList>
            <person name="Mornico D."/>
            <person name="Miche L."/>
            <person name="Bena G."/>
            <person name="Nouwen N."/>
            <person name="Vermeglio A."/>
            <person name="Vallenet D."/>
            <person name="Smith A.A.T."/>
            <person name="Giraud E."/>
            <person name="Medigue C."/>
            <person name="Moulin L."/>
        </authorList>
    </citation>
    <scope>NUCLEOTIDE SEQUENCE [LARGE SCALE GENOMIC DNA]</scope>
    <source>
        <strain>ORS375</strain>
    </source>
</reference>
<reference key="2">
    <citation type="journal article" date="2017" name="Appl. Environ. Microbiol.">
        <title>High resolution X-ray structures of two functionally distinct members of the cyclic amide hydrolase (CyAH) family of Toblerone fold enzymes.</title>
        <authorList>
            <person name="Peat T.S."/>
            <person name="Balotra S."/>
            <person name="Wilding M."/>
            <person name="Hartley C.J."/>
            <person name="Newman J."/>
            <person name="Scott C."/>
        </authorList>
    </citation>
    <scope>FUNCTION</scope>
    <scope>CATALYTIC ACTIVITY</scope>
    <scope>BIOPHYSICOCHEMICAL PROPERTIES</scope>
</reference>
<evidence type="ECO:0000250" key="1">
    <source>
        <dbReference type="UniProtKB" id="P58329"/>
    </source>
</evidence>
<evidence type="ECO:0000255" key="2">
    <source>
        <dbReference type="HAMAP-Rule" id="MF_01989"/>
    </source>
</evidence>
<evidence type="ECO:0000269" key="3">
    <source>
    </source>
</evidence>
<evidence type="ECO:0000305" key="4"/>
<dbReference type="EC" id="3.5.2.15" evidence="2 3"/>
<dbReference type="EMBL" id="CAFI01000184">
    <property type="protein sequence ID" value="CCD93500.1"/>
    <property type="molecule type" value="Genomic_DNA"/>
</dbReference>
<dbReference type="RefSeq" id="WP_009028459.1">
    <property type="nucleotide sequence ID" value="NZ_CAFI01000184.1"/>
</dbReference>
<dbReference type="SMR" id="H0SH23"/>
<dbReference type="OrthoDB" id="569708at2"/>
<dbReference type="SABIO-RK" id="H0SH23"/>
<dbReference type="UniPathway" id="UPA00008">
    <property type="reaction ID" value="UER00502"/>
</dbReference>
<dbReference type="Proteomes" id="UP000003055">
    <property type="component" value="Unassembled WGS sequence"/>
</dbReference>
<dbReference type="GO" id="GO:0018753">
    <property type="term" value="F:cyanuric acid amidohydrolase activity"/>
    <property type="evidence" value="ECO:0007669"/>
    <property type="project" value="UniProtKB-UniRule"/>
</dbReference>
<dbReference type="GO" id="GO:0046872">
    <property type="term" value="F:metal ion binding"/>
    <property type="evidence" value="ECO:0007669"/>
    <property type="project" value="UniProtKB-UniRule"/>
</dbReference>
<dbReference type="GO" id="GO:0019381">
    <property type="term" value="P:atrazine catabolic process"/>
    <property type="evidence" value="ECO:0007669"/>
    <property type="project" value="UniProtKB-UniRule"/>
</dbReference>
<dbReference type="Gene3D" id="3.30.1330.160">
    <property type="entry name" value="Cyanuric acid hydrolase/Barbituras, RU C"/>
    <property type="match status" value="1"/>
</dbReference>
<dbReference type="Gene3D" id="3.30.1330.170">
    <property type="entry name" value="Cyanuric acid hydrolase/Barbiturase, RU A"/>
    <property type="match status" value="1"/>
</dbReference>
<dbReference type="Gene3D" id="3.30.1330.180">
    <property type="entry name" value="Cyanuric acid hydrolase/Barbiturase, RU B"/>
    <property type="match status" value="1"/>
</dbReference>
<dbReference type="HAMAP" id="MF_01989">
    <property type="entry name" value="Cyc_amidohydrol"/>
    <property type="match status" value="1"/>
</dbReference>
<dbReference type="InterPro" id="IPR014086">
    <property type="entry name" value="AtzD/Barbiturase"/>
</dbReference>
<dbReference type="InterPro" id="IPR043008">
    <property type="entry name" value="AtzD/Barbiturase_RUA"/>
</dbReference>
<dbReference type="InterPro" id="IPR043006">
    <property type="entry name" value="AtzD/Barbiturase_RUB"/>
</dbReference>
<dbReference type="InterPro" id="IPR043007">
    <property type="entry name" value="AtzD/Barbiturase_RUC"/>
</dbReference>
<dbReference type="NCBIfam" id="TIGR02714">
    <property type="entry name" value="amido_AtzD_TrzD"/>
    <property type="match status" value="1"/>
</dbReference>
<dbReference type="Pfam" id="PF09663">
    <property type="entry name" value="Amido_AtzD_TrzD"/>
    <property type="match status" value="1"/>
</dbReference>
<sequence length="372" mass="38930">MPTTLRRAHVHRLPMRSPDDVAALEAAITQGTIDPAGIVAILGKTEGNGCVNDFTRAFAVRSLEALLGRHLATEAVRQIAMVMSGGTEGALSPHMIVFEAREVDEGHAPRAFAASLALGRARTPVLPSEHLGRMQQVAQVAAGVRAAMNDAGITDAGDVHYVQVKCPLLTMERIEAAEARGVRTAVRDTLKSMGFSRGASALGVAVALGELAMDELSDTEICTDYARYSERAATSGGVELLDHEIMVAGMSRDWTGPLAIDHGVMRDAIDIEPARAALARLGLDVPGQLPAAARGRIAAVLAKAEAAQSGKVRDVRHTMLDDSDVSSTRHARAFVGGALAGLFGFTDLFVSGGAEHQGPDGGGPVAIIVERT</sequence>
<name>CAH_BRAS3</name>
<comment type="function">
    <text evidence="2 3">Responsible for the hydrolysis of cyanuric acid, an intermediate formed during catabolism of s-triazine based compounds in herbicides such as atrazine and polymers such as melamine. Catalyzes the hydrolytic opening of the s-triazine ring of cyanuric acid (2,4,6-trihydroxy-s-triazine) to yield carbon dioxide and carboxybiuret, which spontaneously decarboxylates to biuret.</text>
</comment>
<comment type="catalytic activity">
    <reaction evidence="2 3">
        <text>cyanurate + H2O = 1-carboxybiuret + H(+)</text>
        <dbReference type="Rhea" id="RHEA:70363"/>
        <dbReference type="ChEBI" id="CHEBI:15377"/>
        <dbReference type="ChEBI" id="CHEBI:15378"/>
        <dbReference type="ChEBI" id="CHEBI:38028"/>
        <dbReference type="ChEBI" id="CHEBI:142864"/>
        <dbReference type="EC" id="3.5.2.15"/>
    </reaction>
</comment>
<comment type="activity regulation">
    <text evidence="1 2">Inhibited by barbituric acid.</text>
</comment>
<comment type="biophysicochemical properties">
    <kinetics>
        <text evidence="3">kcat/KM is with cyanuric acid as substrate.</text>
    </kinetics>
</comment>
<comment type="pathway">
    <text evidence="2">Xenobiotic degradation; atrazine degradation; biuret from cyanurate: step 1/1.</text>
</comment>
<comment type="subunit">
    <text evidence="1 2">Homotetramer.</text>
</comment>
<comment type="domain">
    <text evidence="2">The monomer structure is formed from three repeating units (RUs) that share the same structure as one another. The monomer, the active site and substrate all possess threefold rotational symmetry, to the extent that the active site possesses three potential Ser-Lys catalytic dyads. It is possible that any or all of the three active-site serines may act as nucleophile (albeit only one can do so per catalytic cycle).</text>
</comment>
<comment type="similarity">
    <text evidence="2 4">Belongs to the cyclic amide hydrolase (CyAH) family.</text>
</comment>
<accession>H0SH23</accession>
<feature type="chain" id="PRO_0000439913" description="Cyanuric acid amidohydrolase">
    <location>
        <begin position="1"/>
        <end position="372"/>
    </location>
</feature>
<feature type="region of interest" description="RU A" evidence="2">
    <location>
        <begin position="1"/>
        <end position="105"/>
    </location>
</feature>
<feature type="region of interest" description="RU B" evidence="2">
    <location>
        <begin position="115"/>
        <end position="252"/>
    </location>
</feature>
<feature type="region of interest" description="RU C" evidence="2">
    <location>
        <begin position="258"/>
        <end position="372"/>
    </location>
</feature>
<feature type="active site" evidence="2">
    <location>
        <position position="165"/>
    </location>
</feature>
<feature type="active site" description="Nucleophile" evidence="2">
    <location>
        <position position="235"/>
    </location>
</feature>
<feature type="binding site" evidence="2">
    <location>
        <position position="56"/>
    </location>
    <ligand>
        <name>substrate</name>
    </ligand>
</feature>
<feature type="binding site" evidence="2">
    <location>
        <begin position="84"/>
        <end position="85"/>
    </location>
    <ligand>
        <name>substrate</name>
    </ligand>
</feature>
<feature type="binding site" evidence="2">
    <location>
        <position position="197"/>
    </location>
    <ligand>
        <name>substrate</name>
    </ligand>
</feature>
<feature type="binding site" evidence="2">
    <location>
        <begin position="235"/>
        <end position="236"/>
    </location>
    <ligand>
        <name>substrate</name>
    </ligand>
</feature>
<feature type="binding site" evidence="2">
    <location>
        <position position="305"/>
    </location>
    <ligand>
        <name>Mg(2+)</name>
        <dbReference type="ChEBI" id="CHEBI:18420"/>
        <note>structural</note>
    </ligand>
</feature>
<feature type="binding site" evidence="2">
    <location>
        <position position="332"/>
    </location>
    <ligand>
        <name>substrate</name>
    </ligand>
</feature>
<feature type="binding site" evidence="2">
    <location>
        <begin position="351"/>
        <end position="352"/>
    </location>
    <ligand>
        <name>substrate</name>
    </ligand>
</feature>
<feature type="binding site" evidence="2">
    <location>
        <position position="354"/>
    </location>
    <ligand>
        <name>Mg(2+)</name>
        <dbReference type="ChEBI" id="CHEBI:18420"/>
        <note>structural</note>
    </ligand>
</feature>
<feature type="binding site" evidence="2">
    <location>
        <position position="357"/>
    </location>
    <ligand>
        <name>Mg(2+)</name>
        <dbReference type="ChEBI" id="CHEBI:18420"/>
        <note>structural</note>
    </ligand>
</feature>
<feature type="binding site" evidence="2">
    <location>
        <position position="358"/>
    </location>
    <ligand>
        <name>Mg(2+)</name>
        <dbReference type="ChEBI" id="CHEBI:18420"/>
        <note>structural</note>
    </ligand>
</feature>
<feature type="binding site" evidence="2">
    <location>
        <position position="359"/>
    </location>
    <ligand>
        <name>Mg(2+)</name>
        <dbReference type="ChEBI" id="CHEBI:18420"/>
        <note>structural</note>
    </ligand>
</feature>
<feature type="binding site" evidence="2">
    <location>
        <position position="362"/>
    </location>
    <ligand>
        <name>Mg(2+)</name>
        <dbReference type="ChEBI" id="CHEBI:18420"/>
        <note>structural</note>
    </ligand>
</feature>
<feature type="site" description="Important for substrate specificity" evidence="2">
    <location>
        <position position="328"/>
    </location>
</feature>
<organism>
    <name type="scientific">Bradyrhizobium sp. (strain ORS 375)</name>
    <dbReference type="NCBI Taxonomy" id="566679"/>
    <lineage>
        <taxon>Bacteria</taxon>
        <taxon>Pseudomonadati</taxon>
        <taxon>Pseudomonadota</taxon>
        <taxon>Alphaproteobacteria</taxon>
        <taxon>Hyphomicrobiales</taxon>
        <taxon>Nitrobacteraceae</taxon>
        <taxon>Bradyrhizobium</taxon>
    </lineage>
</organism>
<keyword id="KW-0378">Hydrolase</keyword>
<keyword id="KW-0460">Magnesium</keyword>
<keyword id="KW-0479">Metal-binding</keyword>
<proteinExistence type="evidence at protein level"/>